<comment type="function">
    <text evidence="1">Together with its co-chaperonin GroES, plays an essential role in assisting protein folding. The GroEL-GroES system forms a nano-cage that allows encapsulation of the non-native substrate proteins and provides a physical environment optimized to promote and accelerate protein folding.</text>
</comment>
<comment type="catalytic activity">
    <reaction evidence="1">
        <text>ATP + H2O + a folded polypeptide = ADP + phosphate + an unfolded polypeptide.</text>
        <dbReference type="EC" id="5.6.1.7"/>
    </reaction>
</comment>
<comment type="subunit">
    <text evidence="1">Forms a cylinder of 14 subunits composed of two heptameric rings stacked back-to-back. Interacts with the co-chaperonin GroES.</text>
</comment>
<comment type="subcellular location">
    <subcellularLocation>
        <location evidence="1">Cytoplasm</location>
    </subcellularLocation>
</comment>
<comment type="similarity">
    <text evidence="1">Belongs to the chaperonin (HSP60) family.</text>
</comment>
<comment type="sequence caution" evidence="3">
    <conflict type="erroneous initiation">
        <sequence resource="EMBL-CDS" id="CAJ59798"/>
    </conflict>
</comment>
<proteinExistence type="inferred from homology"/>
<sequence length="550" mass="57529">MPKILTFNEDARHALERGVNALADVVKVTIGPRGRNVVIDQSYGAATITNDGVTIARLVELEDPYENLGAQLAKEVATKTNDVAGDGTTTATVLAQAMVRFGLKQVTAGAAPLSLKLGIEAAVEAVSAALLEQAIEVSSRQTIAQVAAISAQDTQVGELIAEAIDKIGKDGVITVEESQTLGLDLELTEGMQFDKGYISPYFVTDADSQEAILEDAYVLLYPGKISALNEILPILEQVVQERKPLLIIAEDIEGEALSTLVVNSIRKTFQVVAVKAPGFGDRRKALLQDIAVLTGGQVVAGEVGLSLDAVTLADLGRARRVVVDKENTTIVDGGGEADAVADRVRQLKAEIETSDSDWDREKLQERLAKLAGGVAVIRVGAATEVELKEKKHRLEDAVSATRAAIEEGIVAGGGAALAHVTSVLDDGLGRTGDELAGVRIVRTALDAPLNWIARNAGLEGAVIVARVKDLAPGHGYNAATGEYTDLIAAGVIDPVKVTRSAVANAASIAALLITTESLVVEKPAVSDGDHGHSHGHGHSHGHSHPQGPGF</sequence>
<reference key="1">
    <citation type="journal article" date="2007" name="Genome Res.">
        <title>Genome characteristics of facultatively symbiotic Frankia sp. strains reflect host range and host plant biogeography.</title>
        <authorList>
            <person name="Normand P."/>
            <person name="Lapierre P."/>
            <person name="Tisa L.S."/>
            <person name="Gogarten J.P."/>
            <person name="Alloisio N."/>
            <person name="Bagnarol E."/>
            <person name="Bassi C.A."/>
            <person name="Berry A.M."/>
            <person name="Bickhart D.M."/>
            <person name="Choisne N."/>
            <person name="Couloux A."/>
            <person name="Cournoyer B."/>
            <person name="Cruveiller S."/>
            <person name="Daubin V."/>
            <person name="Demange N."/>
            <person name="Francino M.P."/>
            <person name="Goltsman E."/>
            <person name="Huang Y."/>
            <person name="Kopp O.R."/>
            <person name="Labarre L."/>
            <person name="Lapidus A."/>
            <person name="Lavire C."/>
            <person name="Marechal J."/>
            <person name="Martinez M."/>
            <person name="Mastronunzio J.E."/>
            <person name="Mullin B.C."/>
            <person name="Niemann J."/>
            <person name="Pujic P."/>
            <person name="Rawnsley T."/>
            <person name="Rouy Z."/>
            <person name="Schenowitz C."/>
            <person name="Sellstedt A."/>
            <person name="Tavares F."/>
            <person name="Tomkins J.P."/>
            <person name="Vallenet D."/>
            <person name="Valverde C."/>
            <person name="Wall L.G."/>
            <person name="Wang Y."/>
            <person name="Medigue C."/>
            <person name="Benson D.R."/>
        </authorList>
    </citation>
    <scope>NUCLEOTIDE SEQUENCE [LARGE SCALE GENOMIC DNA]</scope>
    <source>
        <strain>DSM 45986 / CECT 9034 / ACN14a</strain>
    </source>
</reference>
<feature type="chain" id="PRO_0000332002" description="Chaperonin GroEL 1">
    <location>
        <begin position="1"/>
        <end position="550"/>
    </location>
</feature>
<feature type="region of interest" description="Disordered" evidence="2">
    <location>
        <begin position="524"/>
        <end position="550"/>
    </location>
</feature>
<feature type="compositionally biased region" description="Basic residues" evidence="2">
    <location>
        <begin position="533"/>
        <end position="543"/>
    </location>
</feature>
<feature type="binding site" evidence="1">
    <location>
        <begin position="29"/>
        <end position="32"/>
    </location>
    <ligand>
        <name>ATP</name>
        <dbReference type="ChEBI" id="CHEBI:30616"/>
    </ligand>
</feature>
<feature type="binding site" evidence="1">
    <location>
        <begin position="86"/>
        <end position="90"/>
    </location>
    <ligand>
        <name>ATP</name>
        <dbReference type="ChEBI" id="CHEBI:30616"/>
    </ligand>
</feature>
<feature type="binding site" evidence="1">
    <location>
        <position position="413"/>
    </location>
    <ligand>
        <name>ATP</name>
        <dbReference type="ChEBI" id="CHEBI:30616"/>
    </ligand>
</feature>
<feature type="binding site" evidence="1">
    <location>
        <begin position="477"/>
        <end position="479"/>
    </location>
    <ligand>
        <name>ATP</name>
        <dbReference type="ChEBI" id="CHEBI:30616"/>
    </ligand>
</feature>
<feature type="binding site" evidence="1">
    <location>
        <position position="493"/>
    </location>
    <ligand>
        <name>ATP</name>
        <dbReference type="ChEBI" id="CHEBI:30616"/>
    </ligand>
</feature>
<organism>
    <name type="scientific">Frankia alni (strain DSM 45986 / CECT 9034 / ACN14a)</name>
    <dbReference type="NCBI Taxonomy" id="326424"/>
    <lineage>
        <taxon>Bacteria</taxon>
        <taxon>Bacillati</taxon>
        <taxon>Actinomycetota</taxon>
        <taxon>Actinomycetes</taxon>
        <taxon>Frankiales</taxon>
        <taxon>Frankiaceae</taxon>
        <taxon>Frankia</taxon>
    </lineage>
</organism>
<name>CH601_FRAAA</name>
<keyword id="KW-0067">ATP-binding</keyword>
<keyword id="KW-0143">Chaperone</keyword>
<keyword id="KW-0963">Cytoplasm</keyword>
<keyword id="KW-0413">Isomerase</keyword>
<keyword id="KW-0547">Nucleotide-binding</keyword>
<keyword id="KW-1185">Reference proteome</keyword>
<accession>Q0RRL9</accession>
<evidence type="ECO:0000255" key="1">
    <source>
        <dbReference type="HAMAP-Rule" id="MF_00600"/>
    </source>
</evidence>
<evidence type="ECO:0000256" key="2">
    <source>
        <dbReference type="SAM" id="MobiDB-lite"/>
    </source>
</evidence>
<evidence type="ECO:0000305" key="3"/>
<gene>
    <name evidence="1" type="primary">groEL1</name>
    <name evidence="1" type="synonym">groL1</name>
    <name type="ordered locus">FRAAL1134</name>
</gene>
<protein>
    <recommendedName>
        <fullName evidence="1">Chaperonin GroEL 1</fullName>
        <ecNumber evidence="1">5.6.1.7</ecNumber>
    </recommendedName>
    <alternativeName>
        <fullName evidence="1">60 kDa chaperonin 1</fullName>
    </alternativeName>
    <alternativeName>
        <fullName evidence="1">Chaperonin-60 1</fullName>
        <shortName evidence="1">Cpn60 1</shortName>
    </alternativeName>
</protein>
<dbReference type="EC" id="5.6.1.7" evidence="1"/>
<dbReference type="EMBL" id="CT573213">
    <property type="protein sequence ID" value="CAJ59798.1"/>
    <property type="status" value="ALT_INIT"/>
    <property type="molecule type" value="Genomic_DNA"/>
</dbReference>
<dbReference type="RefSeq" id="WP_011602340.1">
    <property type="nucleotide sequence ID" value="NC_008278.1"/>
</dbReference>
<dbReference type="SMR" id="Q0RRL9"/>
<dbReference type="STRING" id="326424.FRAAL1134"/>
<dbReference type="KEGG" id="fal:FRAAL1134"/>
<dbReference type="eggNOG" id="COG0459">
    <property type="taxonomic scope" value="Bacteria"/>
</dbReference>
<dbReference type="HOGENOM" id="CLU_016503_3_0_11"/>
<dbReference type="OrthoDB" id="9766614at2"/>
<dbReference type="Proteomes" id="UP000000657">
    <property type="component" value="Chromosome"/>
</dbReference>
<dbReference type="GO" id="GO:0005737">
    <property type="term" value="C:cytoplasm"/>
    <property type="evidence" value="ECO:0007669"/>
    <property type="project" value="UniProtKB-SubCell"/>
</dbReference>
<dbReference type="GO" id="GO:0005524">
    <property type="term" value="F:ATP binding"/>
    <property type="evidence" value="ECO:0007669"/>
    <property type="project" value="UniProtKB-UniRule"/>
</dbReference>
<dbReference type="GO" id="GO:0140662">
    <property type="term" value="F:ATP-dependent protein folding chaperone"/>
    <property type="evidence" value="ECO:0007669"/>
    <property type="project" value="InterPro"/>
</dbReference>
<dbReference type="GO" id="GO:0016853">
    <property type="term" value="F:isomerase activity"/>
    <property type="evidence" value="ECO:0007669"/>
    <property type="project" value="UniProtKB-KW"/>
</dbReference>
<dbReference type="GO" id="GO:0051082">
    <property type="term" value="F:unfolded protein binding"/>
    <property type="evidence" value="ECO:0007669"/>
    <property type="project" value="UniProtKB-UniRule"/>
</dbReference>
<dbReference type="GO" id="GO:0042026">
    <property type="term" value="P:protein refolding"/>
    <property type="evidence" value="ECO:0007669"/>
    <property type="project" value="UniProtKB-UniRule"/>
</dbReference>
<dbReference type="CDD" id="cd03344">
    <property type="entry name" value="GroEL"/>
    <property type="match status" value="1"/>
</dbReference>
<dbReference type="FunFam" id="3.50.7.10:FF:000001">
    <property type="entry name" value="60 kDa chaperonin"/>
    <property type="match status" value="1"/>
</dbReference>
<dbReference type="Gene3D" id="3.50.7.10">
    <property type="entry name" value="GroEL"/>
    <property type="match status" value="1"/>
</dbReference>
<dbReference type="Gene3D" id="1.10.560.10">
    <property type="entry name" value="GroEL-like equatorial domain"/>
    <property type="match status" value="1"/>
</dbReference>
<dbReference type="Gene3D" id="3.30.260.10">
    <property type="entry name" value="TCP-1-like chaperonin intermediate domain"/>
    <property type="match status" value="1"/>
</dbReference>
<dbReference type="HAMAP" id="MF_00600">
    <property type="entry name" value="CH60"/>
    <property type="match status" value="1"/>
</dbReference>
<dbReference type="InterPro" id="IPR018370">
    <property type="entry name" value="Chaperonin_Cpn60_CS"/>
</dbReference>
<dbReference type="InterPro" id="IPR001844">
    <property type="entry name" value="Cpn60/GroEL"/>
</dbReference>
<dbReference type="InterPro" id="IPR002423">
    <property type="entry name" value="Cpn60/GroEL/TCP-1"/>
</dbReference>
<dbReference type="InterPro" id="IPR027409">
    <property type="entry name" value="GroEL-like_apical_dom_sf"/>
</dbReference>
<dbReference type="InterPro" id="IPR027413">
    <property type="entry name" value="GROEL-like_equatorial_sf"/>
</dbReference>
<dbReference type="InterPro" id="IPR027410">
    <property type="entry name" value="TCP-1-like_intermed_sf"/>
</dbReference>
<dbReference type="NCBIfam" id="TIGR02348">
    <property type="entry name" value="GroEL"/>
    <property type="match status" value="1"/>
</dbReference>
<dbReference type="NCBIfam" id="NF000592">
    <property type="entry name" value="PRK00013.1"/>
    <property type="match status" value="1"/>
</dbReference>
<dbReference type="NCBIfam" id="NF009487">
    <property type="entry name" value="PRK12849.1"/>
    <property type="match status" value="1"/>
</dbReference>
<dbReference type="NCBIfam" id="NF009488">
    <property type="entry name" value="PRK12850.1"/>
    <property type="match status" value="1"/>
</dbReference>
<dbReference type="NCBIfam" id="NF009489">
    <property type="entry name" value="PRK12851.1"/>
    <property type="match status" value="1"/>
</dbReference>
<dbReference type="PANTHER" id="PTHR45633">
    <property type="entry name" value="60 KDA HEAT SHOCK PROTEIN, MITOCHONDRIAL"/>
    <property type="match status" value="1"/>
</dbReference>
<dbReference type="Pfam" id="PF00118">
    <property type="entry name" value="Cpn60_TCP1"/>
    <property type="match status" value="1"/>
</dbReference>
<dbReference type="PRINTS" id="PR00298">
    <property type="entry name" value="CHAPERONIN60"/>
</dbReference>
<dbReference type="SUPFAM" id="SSF52029">
    <property type="entry name" value="GroEL apical domain-like"/>
    <property type="match status" value="1"/>
</dbReference>
<dbReference type="SUPFAM" id="SSF48592">
    <property type="entry name" value="GroEL equatorial domain-like"/>
    <property type="match status" value="1"/>
</dbReference>
<dbReference type="SUPFAM" id="SSF54849">
    <property type="entry name" value="GroEL-intermediate domain like"/>
    <property type="match status" value="1"/>
</dbReference>
<dbReference type="PROSITE" id="PS00296">
    <property type="entry name" value="CHAPERONINS_CPN60"/>
    <property type="match status" value="1"/>
</dbReference>